<protein>
    <recommendedName>
        <fullName evidence="1">RNase adapter protein RapZ</fullName>
    </recommendedName>
</protein>
<dbReference type="EMBL" id="CP001277">
    <property type="protein sequence ID" value="ACQ68530.1"/>
    <property type="molecule type" value="Genomic_DNA"/>
</dbReference>
<dbReference type="RefSeq" id="WP_015874289.1">
    <property type="nucleotide sequence ID" value="NC_012751.1"/>
</dbReference>
<dbReference type="SMR" id="C4K7I7"/>
<dbReference type="STRING" id="572265.HDEF_1942"/>
<dbReference type="GeneID" id="66261513"/>
<dbReference type="KEGG" id="hde:HDEF_1942"/>
<dbReference type="eggNOG" id="COG1660">
    <property type="taxonomic scope" value="Bacteria"/>
</dbReference>
<dbReference type="HOGENOM" id="CLU_059558_1_1_6"/>
<dbReference type="Proteomes" id="UP000002334">
    <property type="component" value="Chromosome"/>
</dbReference>
<dbReference type="GO" id="GO:0005524">
    <property type="term" value="F:ATP binding"/>
    <property type="evidence" value="ECO:0007669"/>
    <property type="project" value="UniProtKB-UniRule"/>
</dbReference>
<dbReference type="GO" id="GO:0005525">
    <property type="term" value="F:GTP binding"/>
    <property type="evidence" value="ECO:0007669"/>
    <property type="project" value="UniProtKB-UniRule"/>
</dbReference>
<dbReference type="GO" id="GO:0003723">
    <property type="term" value="F:RNA binding"/>
    <property type="evidence" value="ECO:0007669"/>
    <property type="project" value="UniProtKB-KW"/>
</dbReference>
<dbReference type="HAMAP" id="MF_00636">
    <property type="entry name" value="RapZ_like"/>
    <property type="match status" value="1"/>
</dbReference>
<dbReference type="InterPro" id="IPR027417">
    <property type="entry name" value="P-loop_NTPase"/>
</dbReference>
<dbReference type="InterPro" id="IPR005337">
    <property type="entry name" value="RapZ-like"/>
</dbReference>
<dbReference type="InterPro" id="IPR053930">
    <property type="entry name" value="RapZ-like_N"/>
</dbReference>
<dbReference type="InterPro" id="IPR053931">
    <property type="entry name" value="RapZ_C"/>
</dbReference>
<dbReference type="NCBIfam" id="NF003828">
    <property type="entry name" value="PRK05416.1"/>
    <property type="match status" value="1"/>
</dbReference>
<dbReference type="PANTHER" id="PTHR30448">
    <property type="entry name" value="RNASE ADAPTER PROTEIN RAPZ"/>
    <property type="match status" value="1"/>
</dbReference>
<dbReference type="PANTHER" id="PTHR30448:SF0">
    <property type="entry name" value="RNASE ADAPTER PROTEIN RAPZ"/>
    <property type="match status" value="1"/>
</dbReference>
<dbReference type="Pfam" id="PF22740">
    <property type="entry name" value="PapZ_C"/>
    <property type="match status" value="1"/>
</dbReference>
<dbReference type="Pfam" id="PF03668">
    <property type="entry name" value="RapZ-like_N"/>
    <property type="match status" value="1"/>
</dbReference>
<dbReference type="PIRSF" id="PIRSF005052">
    <property type="entry name" value="P-loopkin"/>
    <property type="match status" value="1"/>
</dbReference>
<dbReference type="SUPFAM" id="SSF52540">
    <property type="entry name" value="P-loop containing nucleoside triphosphate hydrolases"/>
    <property type="match status" value="1"/>
</dbReference>
<feature type="chain" id="PRO_1000212363" description="RNase adapter protein RapZ">
    <location>
        <begin position="1"/>
        <end position="284"/>
    </location>
</feature>
<feature type="region of interest" description="RNA-binding" evidence="1">
    <location>
        <begin position="266"/>
        <end position="284"/>
    </location>
</feature>
<feature type="binding site" evidence="1">
    <location>
        <begin position="8"/>
        <end position="15"/>
    </location>
    <ligand>
        <name>ATP</name>
        <dbReference type="ChEBI" id="CHEBI:30616"/>
    </ligand>
</feature>
<feature type="binding site" evidence="1">
    <location>
        <begin position="56"/>
        <end position="59"/>
    </location>
    <ligand>
        <name>GTP</name>
        <dbReference type="ChEBI" id="CHEBI:37565"/>
    </ligand>
</feature>
<proteinExistence type="inferred from homology"/>
<comment type="function">
    <text evidence="1">Modulates the synthesis of GlmS, by affecting the processing and stability of the regulatory small RNA GlmZ. When glucosamine-6-phosphate (GlcN6P) concentrations are high in the cell, RapZ binds GlmZ and targets it to cleavage by RNase E. Consequently, GlmZ is inactivated and unable to activate GlmS synthesis. Under low GlcN6P concentrations, RapZ is sequestered and inactivated by an other regulatory small RNA, GlmY, preventing GlmZ degradation and leading to synthesis of GlmS.</text>
</comment>
<comment type="subunit">
    <text evidence="1">Homotrimer.</text>
</comment>
<comment type="similarity">
    <text evidence="1">Belongs to the RapZ-like family. RapZ subfamily.</text>
</comment>
<keyword id="KW-0067">ATP-binding</keyword>
<keyword id="KW-0342">GTP-binding</keyword>
<keyword id="KW-0547">Nucleotide-binding</keyword>
<keyword id="KW-0694">RNA-binding</keyword>
<organism>
    <name type="scientific">Hamiltonella defensa subsp. Acyrthosiphon pisum (strain 5AT)</name>
    <dbReference type="NCBI Taxonomy" id="572265"/>
    <lineage>
        <taxon>Bacteria</taxon>
        <taxon>Pseudomonadati</taxon>
        <taxon>Pseudomonadota</taxon>
        <taxon>Gammaproteobacteria</taxon>
        <taxon>Enterobacterales</taxon>
        <taxon>Enterobacteriaceae</taxon>
        <taxon>aphid secondary symbionts</taxon>
        <taxon>Candidatus Hamiltonella</taxon>
    </lineage>
</organism>
<evidence type="ECO:0000255" key="1">
    <source>
        <dbReference type="HAMAP-Rule" id="MF_00636"/>
    </source>
</evidence>
<accession>C4K7I7</accession>
<sequence length="284" mass="32744">MVLMIVSGRSGSGKSVALRALEDMGFYCVDNLPIILLPNLASSLMPRNTPAAISIDVRNMPGSSEIFEKVLTKLNKKFSTRLIFLDANHNTLIQRYSETRRLHPLSGNHLSLEKAIDEENILLEPLRSRADLIINTSEMSVHQLSEMLRVRSLGTKERKLSMVFESFGFKYGLPIYADYVFDVRFLPNPHWDPKLRSMTGLDKPVVDFLKRHSEVHHFIYQTLHYLNQWLPMLENNDRSYLTIAIGCTGGKHRSVYIAEQLADYFRSRGKNVQLRHRTLEKRKE</sequence>
<gene>
    <name evidence="1" type="primary">rapZ</name>
    <name type="ordered locus">HDEF_1942</name>
</gene>
<name>RAPZ_HAMD5</name>
<reference key="1">
    <citation type="journal article" date="2009" name="Proc. Natl. Acad. Sci. U.S.A.">
        <title>Hamiltonella defensa, genome evolution of protective bacterial endosymbiont from pathogenic ancestors.</title>
        <authorList>
            <person name="Degnan P.H."/>
            <person name="Yu Y."/>
            <person name="Sisneros N."/>
            <person name="Wing R.A."/>
            <person name="Moran N.A."/>
        </authorList>
    </citation>
    <scope>NUCLEOTIDE SEQUENCE [LARGE SCALE GENOMIC DNA]</scope>
    <source>
        <strain>5AT</strain>
    </source>
</reference>